<keyword id="KW-0028">Amino-acid biosynthesis</keyword>
<keyword id="KW-0055">Arginine biosynthesis</keyword>
<keyword id="KW-0963">Cytoplasm</keyword>
<keyword id="KW-1185">Reference proteome</keyword>
<keyword id="KW-0808">Transferase</keyword>
<gene>
    <name evidence="2" type="primary">argF</name>
    <name type="ordered locus">Amet_4608</name>
</gene>
<comment type="function">
    <text evidence="1">Reversibly catalyzes the transfer of the carbamoyl group from carbamoyl phosphate (CP) to the N(epsilon) atom of ornithine (ORN) to produce L-citrulline.</text>
</comment>
<comment type="catalytic activity">
    <reaction evidence="2">
        <text>carbamoyl phosphate + L-ornithine = L-citrulline + phosphate + H(+)</text>
        <dbReference type="Rhea" id="RHEA:19513"/>
        <dbReference type="ChEBI" id="CHEBI:15378"/>
        <dbReference type="ChEBI" id="CHEBI:43474"/>
        <dbReference type="ChEBI" id="CHEBI:46911"/>
        <dbReference type="ChEBI" id="CHEBI:57743"/>
        <dbReference type="ChEBI" id="CHEBI:58228"/>
        <dbReference type="EC" id="2.1.3.3"/>
    </reaction>
</comment>
<comment type="pathway">
    <text evidence="2">Amino-acid biosynthesis; L-arginine biosynthesis; L-arginine from L-ornithine and carbamoyl phosphate: step 1/3.</text>
</comment>
<comment type="subcellular location">
    <subcellularLocation>
        <location evidence="2">Cytoplasm</location>
    </subcellularLocation>
</comment>
<comment type="similarity">
    <text evidence="2">Belongs to the aspartate/ornithine carbamoyltransferase superfamily. OTCase family.</text>
</comment>
<protein>
    <recommendedName>
        <fullName evidence="2">Ornithine carbamoyltransferase</fullName>
        <shortName evidence="2">OTCase</shortName>
        <ecNumber evidence="2">2.1.3.3</ecNumber>
    </recommendedName>
</protein>
<accession>A6TWW1</accession>
<name>OTC_ALKMQ</name>
<evidence type="ECO:0000250" key="1"/>
<evidence type="ECO:0000255" key="2">
    <source>
        <dbReference type="HAMAP-Rule" id="MF_01109"/>
    </source>
</evidence>
<proteinExistence type="inferred from homology"/>
<dbReference type="EC" id="2.1.3.3" evidence="2"/>
<dbReference type="EMBL" id="CP000724">
    <property type="protein sequence ID" value="ABR50679.1"/>
    <property type="molecule type" value="Genomic_DNA"/>
</dbReference>
<dbReference type="RefSeq" id="WP_012065567.1">
    <property type="nucleotide sequence ID" value="NC_009633.1"/>
</dbReference>
<dbReference type="SMR" id="A6TWW1"/>
<dbReference type="STRING" id="293826.Amet_4608"/>
<dbReference type="KEGG" id="amt:Amet_4608"/>
<dbReference type="eggNOG" id="COG0078">
    <property type="taxonomic scope" value="Bacteria"/>
</dbReference>
<dbReference type="HOGENOM" id="CLU_043846_3_1_9"/>
<dbReference type="OrthoDB" id="9802587at2"/>
<dbReference type="UniPathway" id="UPA00068">
    <property type="reaction ID" value="UER00112"/>
</dbReference>
<dbReference type="Proteomes" id="UP000001572">
    <property type="component" value="Chromosome"/>
</dbReference>
<dbReference type="GO" id="GO:0005737">
    <property type="term" value="C:cytoplasm"/>
    <property type="evidence" value="ECO:0007669"/>
    <property type="project" value="UniProtKB-SubCell"/>
</dbReference>
<dbReference type="GO" id="GO:0016597">
    <property type="term" value="F:amino acid binding"/>
    <property type="evidence" value="ECO:0007669"/>
    <property type="project" value="InterPro"/>
</dbReference>
<dbReference type="GO" id="GO:0004585">
    <property type="term" value="F:ornithine carbamoyltransferase activity"/>
    <property type="evidence" value="ECO:0007669"/>
    <property type="project" value="UniProtKB-UniRule"/>
</dbReference>
<dbReference type="GO" id="GO:0042450">
    <property type="term" value="P:arginine biosynthetic process via ornithine"/>
    <property type="evidence" value="ECO:0007669"/>
    <property type="project" value="TreeGrafter"/>
</dbReference>
<dbReference type="GO" id="GO:0019240">
    <property type="term" value="P:citrulline biosynthetic process"/>
    <property type="evidence" value="ECO:0007669"/>
    <property type="project" value="TreeGrafter"/>
</dbReference>
<dbReference type="GO" id="GO:0006526">
    <property type="term" value="P:L-arginine biosynthetic process"/>
    <property type="evidence" value="ECO:0007669"/>
    <property type="project" value="UniProtKB-UniRule"/>
</dbReference>
<dbReference type="FunFam" id="3.40.50.1370:FF:000004">
    <property type="entry name" value="Ornithine carbamoyltransferase"/>
    <property type="match status" value="1"/>
</dbReference>
<dbReference type="Gene3D" id="3.40.50.1370">
    <property type="entry name" value="Aspartate/ornithine carbamoyltransferase"/>
    <property type="match status" value="2"/>
</dbReference>
<dbReference type="HAMAP" id="MF_01109">
    <property type="entry name" value="OTCase"/>
    <property type="match status" value="1"/>
</dbReference>
<dbReference type="InterPro" id="IPR006132">
    <property type="entry name" value="Asp/Orn_carbamoyltranf_P-bd"/>
</dbReference>
<dbReference type="InterPro" id="IPR006130">
    <property type="entry name" value="Asp/Orn_carbamoylTrfase"/>
</dbReference>
<dbReference type="InterPro" id="IPR036901">
    <property type="entry name" value="Asp/Orn_carbamoylTrfase_sf"/>
</dbReference>
<dbReference type="InterPro" id="IPR006131">
    <property type="entry name" value="Asp_carbamoyltransf_Asp/Orn-bd"/>
</dbReference>
<dbReference type="InterPro" id="IPR002292">
    <property type="entry name" value="Orn/put_carbamltrans"/>
</dbReference>
<dbReference type="InterPro" id="IPR024904">
    <property type="entry name" value="OTCase_ArgI"/>
</dbReference>
<dbReference type="NCBIfam" id="TIGR00658">
    <property type="entry name" value="orni_carb_tr"/>
    <property type="match status" value="1"/>
</dbReference>
<dbReference type="NCBIfam" id="NF003286">
    <property type="entry name" value="PRK04284.1"/>
    <property type="match status" value="1"/>
</dbReference>
<dbReference type="PANTHER" id="PTHR45753:SF2">
    <property type="entry name" value="ORNITHINE CARBAMOYLTRANSFERASE"/>
    <property type="match status" value="1"/>
</dbReference>
<dbReference type="PANTHER" id="PTHR45753">
    <property type="entry name" value="ORNITHINE CARBAMOYLTRANSFERASE, MITOCHONDRIAL"/>
    <property type="match status" value="1"/>
</dbReference>
<dbReference type="Pfam" id="PF00185">
    <property type="entry name" value="OTCace"/>
    <property type="match status" value="1"/>
</dbReference>
<dbReference type="Pfam" id="PF02729">
    <property type="entry name" value="OTCace_N"/>
    <property type="match status" value="1"/>
</dbReference>
<dbReference type="PRINTS" id="PR00100">
    <property type="entry name" value="AOTCASE"/>
</dbReference>
<dbReference type="PRINTS" id="PR00102">
    <property type="entry name" value="OTCASE"/>
</dbReference>
<dbReference type="SUPFAM" id="SSF53671">
    <property type="entry name" value="Aspartate/ornithine carbamoyltransferase"/>
    <property type="match status" value="1"/>
</dbReference>
<dbReference type="PROSITE" id="PS00097">
    <property type="entry name" value="CARBAMOYLTRANSFERASE"/>
    <property type="match status" value="1"/>
</dbReference>
<feature type="chain" id="PRO_1000084833" description="Ornithine carbamoyltransferase">
    <location>
        <begin position="1"/>
        <end position="330"/>
    </location>
</feature>
<feature type="binding site" evidence="2">
    <location>
        <begin position="57"/>
        <end position="60"/>
    </location>
    <ligand>
        <name>carbamoyl phosphate</name>
        <dbReference type="ChEBI" id="CHEBI:58228"/>
    </ligand>
</feature>
<feature type="binding site" evidence="2">
    <location>
        <position position="84"/>
    </location>
    <ligand>
        <name>carbamoyl phosphate</name>
        <dbReference type="ChEBI" id="CHEBI:58228"/>
    </ligand>
</feature>
<feature type="binding site" evidence="2">
    <location>
        <position position="108"/>
    </location>
    <ligand>
        <name>carbamoyl phosphate</name>
        <dbReference type="ChEBI" id="CHEBI:58228"/>
    </ligand>
</feature>
<feature type="binding site" evidence="2">
    <location>
        <begin position="135"/>
        <end position="138"/>
    </location>
    <ligand>
        <name>carbamoyl phosphate</name>
        <dbReference type="ChEBI" id="CHEBI:58228"/>
    </ligand>
</feature>
<feature type="binding site" evidence="2">
    <location>
        <position position="168"/>
    </location>
    <ligand>
        <name>L-ornithine</name>
        <dbReference type="ChEBI" id="CHEBI:46911"/>
    </ligand>
</feature>
<feature type="binding site" evidence="2">
    <location>
        <position position="232"/>
    </location>
    <ligand>
        <name>L-ornithine</name>
        <dbReference type="ChEBI" id="CHEBI:46911"/>
    </ligand>
</feature>
<feature type="binding site" evidence="2">
    <location>
        <begin position="236"/>
        <end position="237"/>
    </location>
    <ligand>
        <name>L-ornithine</name>
        <dbReference type="ChEBI" id="CHEBI:46911"/>
    </ligand>
</feature>
<feature type="binding site" evidence="2">
    <location>
        <begin position="273"/>
        <end position="274"/>
    </location>
    <ligand>
        <name>carbamoyl phosphate</name>
        <dbReference type="ChEBI" id="CHEBI:58228"/>
    </ligand>
</feature>
<feature type="binding site" evidence="2">
    <location>
        <position position="318"/>
    </location>
    <ligand>
        <name>carbamoyl phosphate</name>
        <dbReference type="ChEBI" id="CHEBI:58228"/>
    </ligand>
</feature>
<reference key="1">
    <citation type="journal article" date="2016" name="Genome Announc.">
        <title>Complete genome sequence of Alkaliphilus metalliredigens strain QYMF, an alkaliphilic and metal-reducing bacterium isolated from borax-contaminated leachate ponds.</title>
        <authorList>
            <person name="Hwang C."/>
            <person name="Copeland A."/>
            <person name="Lucas S."/>
            <person name="Lapidus A."/>
            <person name="Barry K."/>
            <person name="Detter J.C."/>
            <person name="Glavina Del Rio T."/>
            <person name="Hammon N."/>
            <person name="Israni S."/>
            <person name="Dalin E."/>
            <person name="Tice H."/>
            <person name="Pitluck S."/>
            <person name="Chertkov O."/>
            <person name="Brettin T."/>
            <person name="Bruce D."/>
            <person name="Han C."/>
            <person name="Schmutz J."/>
            <person name="Larimer F."/>
            <person name="Land M.L."/>
            <person name="Hauser L."/>
            <person name="Kyrpides N."/>
            <person name="Mikhailova N."/>
            <person name="Ye Q."/>
            <person name="Zhou J."/>
            <person name="Richardson P."/>
            <person name="Fields M.W."/>
        </authorList>
    </citation>
    <scope>NUCLEOTIDE SEQUENCE [LARGE SCALE GENOMIC DNA]</scope>
    <source>
        <strain>QYMF</strain>
    </source>
</reference>
<sequence>MPVNLKGRSFLTLKDFTSQEIQHLLDLSRDLKAKKRMGVKGESLLGKNIVLLFEKASTRTRCAFEVAALDEGAHVTFLGSNDSQIGKKESIEDTAKVLGRFYDGMEFRGFKQETVETLAAHAGIPVWNGLTDLYHPTQILADFLTIMEHIDKPLNKVKFAYVGDARNNMGNSLMIGAAKMGMDFRAVAPKELLPKGELVEEMRAVAAETGGEITLTDDVAEGVKDADVIYTDVWVSMGEEDQFEVRIKQLLPYQVNMDMIKATGNPDMIFMHCLPAFHDLETTVGKEIHEKFGLKSMEVTDEVFRSRHSVVFDEAENRLHTIKAIMVATL</sequence>
<organism>
    <name type="scientific">Alkaliphilus metalliredigens (strain QYMF)</name>
    <dbReference type="NCBI Taxonomy" id="293826"/>
    <lineage>
        <taxon>Bacteria</taxon>
        <taxon>Bacillati</taxon>
        <taxon>Bacillota</taxon>
        <taxon>Clostridia</taxon>
        <taxon>Peptostreptococcales</taxon>
        <taxon>Natronincolaceae</taxon>
        <taxon>Alkaliphilus</taxon>
    </lineage>
</organism>